<proteinExistence type="inferred from homology"/>
<organism>
    <name type="scientific">Clostridioides difficile (strain 630)</name>
    <name type="common">Peptoclostridium difficile</name>
    <dbReference type="NCBI Taxonomy" id="272563"/>
    <lineage>
        <taxon>Bacteria</taxon>
        <taxon>Bacillati</taxon>
        <taxon>Bacillota</taxon>
        <taxon>Clostridia</taxon>
        <taxon>Peptostreptococcales</taxon>
        <taxon>Peptostreptococcaceae</taxon>
        <taxon>Clostridioides</taxon>
    </lineage>
</organism>
<sequence>MVNLNDAYEIARYIKEVKKKTPVKVYVNTNSLHFQSTDKFKVFGSNGSYIFVGDYEDIMEVLDKHGNDITDTHVEYDRRNSAIPLKNTLSEHARIEPGAIIRDMVTIEKNAVVMMGAVINIGAVIGEGSMVDMNAVIGARGTLGKNVHLGAGAVVAGVLEPPSATPVIVEDDVLIGANAVILEGVRIGKGAVVAAGAVVTTDVEAGAVVAGSPAKVIKMKDEKTADKTKLMEDLRNLD</sequence>
<comment type="function">
    <text evidence="1">Catalyzes the transfer of an acetyl group from acetyl-CoA to tetrahydrodipicolinate.</text>
</comment>
<comment type="catalytic activity">
    <reaction evidence="1">
        <text>(S)-2,3,4,5-tetrahydrodipicolinate + acetyl-CoA + H2O = L-2-acetamido-6-oxoheptanedioate + CoA</text>
        <dbReference type="Rhea" id="RHEA:13085"/>
        <dbReference type="ChEBI" id="CHEBI:15377"/>
        <dbReference type="ChEBI" id="CHEBI:16845"/>
        <dbReference type="ChEBI" id="CHEBI:57287"/>
        <dbReference type="ChEBI" id="CHEBI:57288"/>
        <dbReference type="ChEBI" id="CHEBI:58117"/>
        <dbReference type="EC" id="2.3.1.89"/>
    </reaction>
</comment>
<comment type="pathway">
    <text evidence="1">Amino-acid biosynthesis; L-lysine biosynthesis via DAP pathway; LL-2,6-diaminopimelate from (S)-tetrahydrodipicolinate (acetylase route): step 1/3.</text>
</comment>
<comment type="similarity">
    <text evidence="1">Belongs to the transferase hexapeptide repeat family. DapH subfamily.</text>
</comment>
<keyword id="KW-0012">Acyltransferase</keyword>
<keyword id="KW-0028">Amino-acid biosynthesis</keyword>
<keyword id="KW-0220">Diaminopimelate biosynthesis</keyword>
<keyword id="KW-0457">Lysine biosynthesis</keyword>
<keyword id="KW-1185">Reference proteome</keyword>
<keyword id="KW-0677">Repeat</keyword>
<keyword id="KW-0808">Transferase</keyword>
<evidence type="ECO:0000255" key="1">
    <source>
        <dbReference type="HAMAP-Rule" id="MF_01691"/>
    </source>
</evidence>
<name>DAPH_CLOD6</name>
<feature type="chain" id="PRO_0000376651" description="2,3,4,5-tetrahydropyridine-2,6-dicarboxylate N-acetyltransferase">
    <location>
        <begin position="1"/>
        <end position="238"/>
    </location>
</feature>
<gene>
    <name evidence="1" type="primary">dapH</name>
    <name type="ordered locus">CD630_32270</name>
</gene>
<dbReference type="EC" id="2.3.1.89" evidence="1"/>
<dbReference type="EMBL" id="AM180355">
    <property type="protein sequence ID" value="CAJ70125.1"/>
    <property type="molecule type" value="Genomic_DNA"/>
</dbReference>
<dbReference type="RefSeq" id="YP_001089744.1">
    <property type="nucleotide sequence ID" value="NC_009089.1"/>
</dbReference>
<dbReference type="SMR" id="Q17ZX2"/>
<dbReference type="STRING" id="272563.CD630_32270"/>
<dbReference type="EnsemblBacteria" id="CAJ70125">
    <property type="protein sequence ID" value="CAJ70125"/>
    <property type="gene ID" value="CD630_32270"/>
</dbReference>
<dbReference type="KEGG" id="cdf:CD630_32270"/>
<dbReference type="KEGG" id="pdc:CDIF630_03523"/>
<dbReference type="PATRIC" id="fig|272563.120.peg.3408"/>
<dbReference type="eggNOG" id="COG2171">
    <property type="taxonomic scope" value="Bacteria"/>
</dbReference>
<dbReference type="OrthoDB" id="9788080at2"/>
<dbReference type="PhylomeDB" id="Q17ZX2"/>
<dbReference type="BioCyc" id="PDIF272563:G12WB-3394-MONOMER"/>
<dbReference type="UniPathway" id="UPA00034">
    <property type="reaction ID" value="UER00022"/>
</dbReference>
<dbReference type="Proteomes" id="UP000001978">
    <property type="component" value="Chromosome"/>
</dbReference>
<dbReference type="GO" id="GO:0047200">
    <property type="term" value="F:tetrahydrodipicolinate N-acetyltransferase activity"/>
    <property type="evidence" value="ECO:0007669"/>
    <property type="project" value="UniProtKB-EC"/>
</dbReference>
<dbReference type="GO" id="GO:0019877">
    <property type="term" value="P:diaminopimelate biosynthetic process"/>
    <property type="evidence" value="ECO:0007669"/>
    <property type="project" value="UniProtKB-UniRule"/>
</dbReference>
<dbReference type="GO" id="GO:0009089">
    <property type="term" value="P:lysine biosynthetic process via diaminopimelate"/>
    <property type="evidence" value="ECO:0007669"/>
    <property type="project" value="UniProtKB-UniRule"/>
</dbReference>
<dbReference type="CDD" id="cd03350">
    <property type="entry name" value="LbH_THP_succinylT"/>
    <property type="match status" value="1"/>
</dbReference>
<dbReference type="Gene3D" id="2.160.10.10">
    <property type="entry name" value="Hexapeptide repeat proteins"/>
    <property type="match status" value="1"/>
</dbReference>
<dbReference type="Gene3D" id="3.30.70.250">
    <property type="entry name" value="Malonyl-CoA ACP transacylase, ACP-binding"/>
    <property type="match status" value="1"/>
</dbReference>
<dbReference type="HAMAP" id="MF_01691">
    <property type="entry name" value="DapH"/>
    <property type="match status" value="1"/>
</dbReference>
<dbReference type="InterPro" id="IPR019873">
    <property type="entry name" value="DapH"/>
</dbReference>
<dbReference type="InterPro" id="IPR013710">
    <property type="entry name" value="DapH_N"/>
</dbReference>
<dbReference type="InterPro" id="IPR001451">
    <property type="entry name" value="Hexapep"/>
</dbReference>
<dbReference type="InterPro" id="IPR018357">
    <property type="entry name" value="Hexapep_transf_CS"/>
</dbReference>
<dbReference type="InterPro" id="IPR050179">
    <property type="entry name" value="Trans_hexapeptide_repeat"/>
</dbReference>
<dbReference type="InterPro" id="IPR011004">
    <property type="entry name" value="Trimer_LpxA-like_sf"/>
</dbReference>
<dbReference type="NCBIfam" id="TIGR03532">
    <property type="entry name" value="DapD_Ac"/>
    <property type="match status" value="1"/>
</dbReference>
<dbReference type="PANTHER" id="PTHR43300:SF10">
    <property type="entry name" value="2,3,4,5-TETRAHYDROPYRIDINE-2,6-DICARBOXYLATE N-ACETYLTRANSFERASE"/>
    <property type="match status" value="1"/>
</dbReference>
<dbReference type="PANTHER" id="PTHR43300">
    <property type="entry name" value="ACETYLTRANSFERASE"/>
    <property type="match status" value="1"/>
</dbReference>
<dbReference type="Pfam" id="PF08503">
    <property type="entry name" value="DapH_N"/>
    <property type="match status" value="1"/>
</dbReference>
<dbReference type="Pfam" id="PF00132">
    <property type="entry name" value="Hexapep"/>
    <property type="match status" value="1"/>
</dbReference>
<dbReference type="Pfam" id="PF14602">
    <property type="entry name" value="Hexapep_2"/>
    <property type="match status" value="1"/>
</dbReference>
<dbReference type="SUPFAM" id="SSF51161">
    <property type="entry name" value="Trimeric LpxA-like enzymes"/>
    <property type="match status" value="1"/>
</dbReference>
<dbReference type="PROSITE" id="PS00101">
    <property type="entry name" value="HEXAPEP_TRANSFERASES"/>
    <property type="match status" value="1"/>
</dbReference>
<accession>Q17ZX2</accession>
<reference key="1">
    <citation type="journal article" date="2006" name="Nat. Genet.">
        <title>The multidrug-resistant human pathogen Clostridium difficile has a highly mobile, mosaic genome.</title>
        <authorList>
            <person name="Sebaihia M."/>
            <person name="Wren B.W."/>
            <person name="Mullany P."/>
            <person name="Fairweather N.F."/>
            <person name="Minton N."/>
            <person name="Stabler R."/>
            <person name="Thomson N.R."/>
            <person name="Roberts A.P."/>
            <person name="Cerdeno-Tarraga A.M."/>
            <person name="Wang H."/>
            <person name="Holden M.T.G."/>
            <person name="Wright A."/>
            <person name="Churcher C."/>
            <person name="Quail M.A."/>
            <person name="Baker S."/>
            <person name="Bason N."/>
            <person name="Brooks K."/>
            <person name="Chillingworth T."/>
            <person name="Cronin A."/>
            <person name="Davis P."/>
            <person name="Dowd L."/>
            <person name="Fraser A."/>
            <person name="Feltwell T."/>
            <person name="Hance Z."/>
            <person name="Holroyd S."/>
            <person name="Jagels K."/>
            <person name="Moule S."/>
            <person name="Mungall K."/>
            <person name="Price C."/>
            <person name="Rabbinowitsch E."/>
            <person name="Sharp S."/>
            <person name="Simmonds M."/>
            <person name="Stevens K."/>
            <person name="Unwin L."/>
            <person name="Whithead S."/>
            <person name="Dupuy B."/>
            <person name="Dougan G."/>
            <person name="Barrell B."/>
            <person name="Parkhill J."/>
        </authorList>
    </citation>
    <scope>NUCLEOTIDE SEQUENCE [LARGE SCALE GENOMIC DNA]</scope>
    <source>
        <strain>630</strain>
    </source>
</reference>
<protein>
    <recommendedName>
        <fullName evidence="1">2,3,4,5-tetrahydropyridine-2,6-dicarboxylate N-acetyltransferase</fullName>
        <ecNumber evidence="1">2.3.1.89</ecNumber>
    </recommendedName>
    <alternativeName>
        <fullName evidence="1">Tetrahydrodipicolinate N-acetyltransferase</fullName>
        <shortName evidence="1">THP acetyltransferase</shortName>
        <shortName evidence="1">Tetrahydropicolinate acetylase</shortName>
    </alternativeName>
</protein>